<sequence length="248" mass="27476">MSAATAPERGWKSEKVDEAQALARSCAARRPDFQPCDGLSICATHSHGKCFKLHWCCHLGWCHCKYVYQPMTPVEQLPSTEIPAKPREPTNTIQISVSLTEHFLKFASVFQPPLPPDSPRYCMISDLFIDNYQVKCINGKMCYVQKQQAPHSQKMSPEEVSAHDALISKESDTPKLGHCSSPSGSEDSGINAIGAHYVESCDEDTEEGAELSSEEDYSPESSWEPDECTLLSPSQSDLEVIETMETTV</sequence>
<reference key="1">
    <citation type="journal article" date="2005" name="Science">
        <title>The transcriptional landscape of the mammalian genome.</title>
        <authorList>
            <person name="Carninci P."/>
            <person name="Kasukawa T."/>
            <person name="Katayama S."/>
            <person name="Gough J."/>
            <person name="Frith M.C."/>
            <person name="Maeda N."/>
            <person name="Oyama R."/>
            <person name="Ravasi T."/>
            <person name="Lenhard B."/>
            <person name="Wells C."/>
            <person name="Kodzius R."/>
            <person name="Shimokawa K."/>
            <person name="Bajic V.B."/>
            <person name="Brenner S.E."/>
            <person name="Batalov S."/>
            <person name="Forrest A.R."/>
            <person name="Zavolan M."/>
            <person name="Davis M.J."/>
            <person name="Wilming L.G."/>
            <person name="Aidinis V."/>
            <person name="Allen J.E."/>
            <person name="Ambesi-Impiombato A."/>
            <person name="Apweiler R."/>
            <person name="Aturaliya R.N."/>
            <person name="Bailey T.L."/>
            <person name="Bansal M."/>
            <person name="Baxter L."/>
            <person name="Beisel K.W."/>
            <person name="Bersano T."/>
            <person name="Bono H."/>
            <person name="Chalk A.M."/>
            <person name="Chiu K.P."/>
            <person name="Choudhary V."/>
            <person name="Christoffels A."/>
            <person name="Clutterbuck D.R."/>
            <person name="Crowe M.L."/>
            <person name="Dalla E."/>
            <person name="Dalrymple B.P."/>
            <person name="de Bono B."/>
            <person name="Della Gatta G."/>
            <person name="di Bernardo D."/>
            <person name="Down T."/>
            <person name="Engstrom P."/>
            <person name="Fagiolini M."/>
            <person name="Faulkner G."/>
            <person name="Fletcher C.F."/>
            <person name="Fukushima T."/>
            <person name="Furuno M."/>
            <person name="Futaki S."/>
            <person name="Gariboldi M."/>
            <person name="Georgii-Hemming P."/>
            <person name="Gingeras T.R."/>
            <person name="Gojobori T."/>
            <person name="Green R.E."/>
            <person name="Gustincich S."/>
            <person name="Harbers M."/>
            <person name="Hayashi Y."/>
            <person name="Hensch T.K."/>
            <person name="Hirokawa N."/>
            <person name="Hill D."/>
            <person name="Huminiecki L."/>
            <person name="Iacono M."/>
            <person name="Ikeo K."/>
            <person name="Iwama A."/>
            <person name="Ishikawa T."/>
            <person name="Jakt M."/>
            <person name="Kanapin A."/>
            <person name="Katoh M."/>
            <person name="Kawasawa Y."/>
            <person name="Kelso J."/>
            <person name="Kitamura H."/>
            <person name="Kitano H."/>
            <person name="Kollias G."/>
            <person name="Krishnan S.P."/>
            <person name="Kruger A."/>
            <person name="Kummerfeld S.K."/>
            <person name="Kurochkin I.V."/>
            <person name="Lareau L.F."/>
            <person name="Lazarevic D."/>
            <person name="Lipovich L."/>
            <person name="Liu J."/>
            <person name="Liuni S."/>
            <person name="McWilliam S."/>
            <person name="Madan Babu M."/>
            <person name="Madera M."/>
            <person name="Marchionni L."/>
            <person name="Matsuda H."/>
            <person name="Matsuzawa S."/>
            <person name="Miki H."/>
            <person name="Mignone F."/>
            <person name="Miyake S."/>
            <person name="Morris K."/>
            <person name="Mottagui-Tabar S."/>
            <person name="Mulder N."/>
            <person name="Nakano N."/>
            <person name="Nakauchi H."/>
            <person name="Ng P."/>
            <person name="Nilsson R."/>
            <person name="Nishiguchi S."/>
            <person name="Nishikawa S."/>
            <person name="Nori F."/>
            <person name="Ohara O."/>
            <person name="Okazaki Y."/>
            <person name="Orlando V."/>
            <person name="Pang K.C."/>
            <person name="Pavan W.J."/>
            <person name="Pavesi G."/>
            <person name="Pesole G."/>
            <person name="Petrovsky N."/>
            <person name="Piazza S."/>
            <person name="Reed J."/>
            <person name="Reid J.F."/>
            <person name="Ring B.Z."/>
            <person name="Ringwald M."/>
            <person name="Rost B."/>
            <person name="Ruan Y."/>
            <person name="Salzberg S.L."/>
            <person name="Sandelin A."/>
            <person name="Schneider C."/>
            <person name="Schoenbach C."/>
            <person name="Sekiguchi K."/>
            <person name="Semple C.A."/>
            <person name="Seno S."/>
            <person name="Sessa L."/>
            <person name="Sheng Y."/>
            <person name="Shibata Y."/>
            <person name="Shimada H."/>
            <person name="Shimada K."/>
            <person name="Silva D."/>
            <person name="Sinclair B."/>
            <person name="Sperling S."/>
            <person name="Stupka E."/>
            <person name="Sugiura K."/>
            <person name="Sultana R."/>
            <person name="Takenaka Y."/>
            <person name="Taki K."/>
            <person name="Tammoja K."/>
            <person name="Tan S.L."/>
            <person name="Tang S."/>
            <person name="Taylor M.S."/>
            <person name="Tegner J."/>
            <person name="Teichmann S.A."/>
            <person name="Ueda H.R."/>
            <person name="van Nimwegen E."/>
            <person name="Verardo R."/>
            <person name="Wei C.L."/>
            <person name="Yagi K."/>
            <person name="Yamanishi H."/>
            <person name="Zabarovsky E."/>
            <person name="Zhu S."/>
            <person name="Zimmer A."/>
            <person name="Hide W."/>
            <person name="Bult C."/>
            <person name="Grimmond S.M."/>
            <person name="Teasdale R.D."/>
            <person name="Liu E.T."/>
            <person name="Brusic V."/>
            <person name="Quackenbush J."/>
            <person name="Wahlestedt C."/>
            <person name="Mattick J.S."/>
            <person name="Hume D.A."/>
            <person name="Kai C."/>
            <person name="Sasaki D."/>
            <person name="Tomaru Y."/>
            <person name="Fukuda S."/>
            <person name="Kanamori-Katayama M."/>
            <person name="Suzuki M."/>
            <person name="Aoki J."/>
            <person name="Arakawa T."/>
            <person name="Iida J."/>
            <person name="Imamura K."/>
            <person name="Itoh M."/>
            <person name="Kato T."/>
            <person name="Kawaji H."/>
            <person name="Kawagashira N."/>
            <person name="Kawashima T."/>
            <person name="Kojima M."/>
            <person name="Kondo S."/>
            <person name="Konno H."/>
            <person name="Nakano K."/>
            <person name="Ninomiya N."/>
            <person name="Nishio T."/>
            <person name="Okada M."/>
            <person name="Plessy C."/>
            <person name="Shibata K."/>
            <person name="Shiraki T."/>
            <person name="Suzuki S."/>
            <person name="Tagami M."/>
            <person name="Waki K."/>
            <person name="Watahiki A."/>
            <person name="Okamura-Oho Y."/>
            <person name="Suzuki H."/>
            <person name="Kawai J."/>
            <person name="Hayashizaki Y."/>
        </authorList>
    </citation>
    <scope>NUCLEOTIDE SEQUENCE [LARGE SCALE MRNA]</scope>
    <source>
        <strain>C57BL/6J</strain>
        <tissue>Retina</tissue>
    </source>
</reference>
<reference key="2">
    <citation type="journal article" date="2004" name="Genome Res.">
        <title>The status, quality, and expansion of the NIH full-length cDNA project: the Mammalian Gene Collection (MGC).</title>
        <authorList>
            <consortium name="The MGC Project Team"/>
        </authorList>
    </citation>
    <scope>NUCLEOTIDE SEQUENCE [LARGE SCALE MRNA]</scope>
    <source>
        <strain>C57BL/6J</strain>
        <tissue>Brain</tissue>
    </source>
</reference>
<comment type="function">
    <text evidence="1">May play a role in neuronal and neurobehavioral development.</text>
</comment>
<comment type="similarity">
    <text evidence="3">Belongs to the UPF0524 family.</text>
</comment>
<protein>
    <recommendedName>
        <fullName>UPF0524 protein C3orf70 homolog</fullName>
    </recommendedName>
</protein>
<keyword id="KW-0524">Neurogenesis</keyword>
<keyword id="KW-1185">Reference proteome</keyword>
<dbReference type="EMBL" id="AK044207">
    <property type="protein sequence ID" value="BAC31815.1"/>
    <property type="molecule type" value="mRNA"/>
</dbReference>
<dbReference type="EMBL" id="BC072629">
    <property type="protein sequence ID" value="AAH72629.1"/>
    <property type="molecule type" value="mRNA"/>
</dbReference>
<dbReference type="CCDS" id="CCDS28062.1"/>
<dbReference type="RefSeq" id="NP_001001881.1">
    <property type="nucleotide sequence ID" value="NM_001001881.2"/>
</dbReference>
<dbReference type="BioGRID" id="215208">
    <property type="interactions" value="1"/>
</dbReference>
<dbReference type="FunCoup" id="Q6GQU0">
    <property type="interactions" value="18"/>
</dbReference>
<dbReference type="STRING" id="10090.ENSMUSP00000062303"/>
<dbReference type="PhosphoSitePlus" id="Q6GQU0"/>
<dbReference type="PaxDb" id="10090-ENSMUSP00000062303"/>
<dbReference type="Antibodypedia" id="52632">
    <property type="antibodies" value="35 antibodies from 10 providers"/>
</dbReference>
<dbReference type="Ensembl" id="ENSMUST00000053336.8">
    <property type="protein sequence ID" value="ENSMUSP00000062303.8"/>
    <property type="gene ID" value="ENSMUSG00000043391.11"/>
</dbReference>
<dbReference type="GeneID" id="72190"/>
<dbReference type="KEGG" id="mmu:72190"/>
<dbReference type="UCSC" id="uc007yrl.2">
    <property type="organism name" value="mouse"/>
</dbReference>
<dbReference type="AGR" id="MGI:1919440"/>
<dbReference type="MGI" id="MGI:1919440">
    <property type="gene designation" value="2510009E07Rik"/>
</dbReference>
<dbReference type="VEuPathDB" id="HostDB:ENSMUSG00000043391"/>
<dbReference type="eggNOG" id="ENOG502QQSJ">
    <property type="taxonomic scope" value="Eukaryota"/>
</dbReference>
<dbReference type="GeneTree" id="ENSGT00390000006618"/>
<dbReference type="HOGENOM" id="CLU_081879_0_0_1"/>
<dbReference type="InParanoid" id="Q6GQU0"/>
<dbReference type="OMA" id="GAHKCPK"/>
<dbReference type="OrthoDB" id="8924346at2759"/>
<dbReference type="PhylomeDB" id="Q6GQU0"/>
<dbReference type="TreeFam" id="TF328625"/>
<dbReference type="BioGRID-ORCS" id="72190">
    <property type="hits" value="4 hits in 79 CRISPR screens"/>
</dbReference>
<dbReference type="PRO" id="PR:Q6GQU0"/>
<dbReference type="Proteomes" id="UP000000589">
    <property type="component" value="Chromosome 16"/>
</dbReference>
<dbReference type="RNAct" id="Q6GQU0">
    <property type="molecule type" value="protein"/>
</dbReference>
<dbReference type="Bgee" id="ENSMUSG00000043391">
    <property type="expression patterns" value="Expressed in habenula and 249 other cell types or tissues"/>
</dbReference>
<dbReference type="ExpressionAtlas" id="Q6GQU0">
    <property type="expression patterns" value="baseline and differential"/>
</dbReference>
<dbReference type="GO" id="GO:0048512">
    <property type="term" value="P:circadian behavior"/>
    <property type="evidence" value="ECO:0000250"/>
    <property type="project" value="UniProtKB"/>
</dbReference>
<dbReference type="GO" id="GO:0007399">
    <property type="term" value="P:nervous system development"/>
    <property type="evidence" value="ECO:0000250"/>
    <property type="project" value="UniProtKB"/>
</dbReference>
<dbReference type="InterPro" id="IPR029670">
    <property type="entry name" value="UPF0524_fam"/>
</dbReference>
<dbReference type="PANTHER" id="PTHR31785">
    <property type="entry name" value="UPF0524 PROTEIN C3ORF70"/>
    <property type="match status" value="1"/>
</dbReference>
<dbReference type="PANTHER" id="PTHR31785:SF2">
    <property type="entry name" value="UPF0524 PROTEIN C3ORF70"/>
    <property type="match status" value="1"/>
</dbReference>
<dbReference type="Pfam" id="PF15823">
    <property type="entry name" value="UPF0524"/>
    <property type="match status" value="1"/>
</dbReference>
<organism>
    <name type="scientific">Mus musculus</name>
    <name type="common">Mouse</name>
    <dbReference type="NCBI Taxonomy" id="10090"/>
    <lineage>
        <taxon>Eukaryota</taxon>
        <taxon>Metazoa</taxon>
        <taxon>Chordata</taxon>
        <taxon>Craniata</taxon>
        <taxon>Vertebrata</taxon>
        <taxon>Euteleostomi</taxon>
        <taxon>Mammalia</taxon>
        <taxon>Eutheria</taxon>
        <taxon>Euarchontoglires</taxon>
        <taxon>Glires</taxon>
        <taxon>Rodentia</taxon>
        <taxon>Myomorpha</taxon>
        <taxon>Muroidea</taxon>
        <taxon>Muridae</taxon>
        <taxon>Murinae</taxon>
        <taxon>Mus</taxon>
        <taxon>Mus</taxon>
    </lineage>
</organism>
<accession>Q6GQU0</accession>
<accession>Q8C8Z2</accession>
<proteinExistence type="evidence at transcript level"/>
<name>CC070_MOUSE</name>
<evidence type="ECO:0000250" key="1">
    <source>
        <dbReference type="UniProtKB" id="Q1LY84"/>
    </source>
</evidence>
<evidence type="ECO:0000256" key="2">
    <source>
        <dbReference type="SAM" id="MobiDB-lite"/>
    </source>
</evidence>
<evidence type="ECO:0000305" key="3"/>
<feature type="chain" id="PRO_0000319977" description="UPF0524 protein C3orf70 homolog">
    <location>
        <begin position="1"/>
        <end position="248"/>
    </location>
</feature>
<feature type="region of interest" description="Disordered" evidence="2">
    <location>
        <begin position="169"/>
        <end position="248"/>
    </location>
</feature>
<feature type="compositionally biased region" description="Acidic residues" evidence="2">
    <location>
        <begin position="200"/>
        <end position="227"/>
    </location>
</feature>
<feature type="sequence conflict" description="In Ref. 1; BAC31815." evidence="3" ref="1">
    <original>L</original>
    <variation>H</variation>
    <location>
        <position position="114"/>
    </location>
</feature>